<organism>
    <name type="scientific">Escherichia coli O6:H1 (strain CFT073 / ATCC 700928 / UPEC)</name>
    <dbReference type="NCBI Taxonomy" id="199310"/>
    <lineage>
        <taxon>Bacteria</taxon>
        <taxon>Pseudomonadati</taxon>
        <taxon>Pseudomonadota</taxon>
        <taxon>Gammaproteobacteria</taxon>
        <taxon>Enterobacterales</taxon>
        <taxon>Enterobacteriaceae</taxon>
        <taxon>Escherichia</taxon>
    </lineage>
</organism>
<gene>
    <name type="primary">codB</name>
    <name type="ordered locus">c0455</name>
</gene>
<name>CODB_ECOL6</name>
<dbReference type="EMBL" id="AE014075">
    <property type="protein sequence ID" value="AAN78934.1"/>
    <property type="molecule type" value="Genomic_DNA"/>
</dbReference>
<dbReference type="RefSeq" id="WP_000076233.1">
    <property type="nucleotide sequence ID" value="NZ_CP051263.1"/>
</dbReference>
<dbReference type="SMR" id="P0AA83"/>
<dbReference type="STRING" id="199310.c0455"/>
<dbReference type="KEGG" id="ecc:c0455"/>
<dbReference type="eggNOG" id="COG1457">
    <property type="taxonomic scope" value="Bacteria"/>
</dbReference>
<dbReference type="HOGENOM" id="CLU_035711_1_1_6"/>
<dbReference type="BioCyc" id="ECOL199310:C0455-MONOMER"/>
<dbReference type="Proteomes" id="UP000001410">
    <property type="component" value="Chromosome"/>
</dbReference>
<dbReference type="GO" id="GO:0005886">
    <property type="term" value="C:plasma membrane"/>
    <property type="evidence" value="ECO:0007669"/>
    <property type="project" value="UniProtKB-SubCell"/>
</dbReference>
<dbReference type="GO" id="GO:0015209">
    <property type="term" value="F:cytosine transmembrane transporter activity"/>
    <property type="evidence" value="ECO:0007669"/>
    <property type="project" value="InterPro"/>
</dbReference>
<dbReference type="GO" id="GO:0019858">
    <property type="term" value="P:cytosine metabolic process"/>
    <property type="evidence" value="ECO:0007669"/>
    <property type="project" value="UniProtKB-KW"/>
</dbReference>
<dbReference type="CDD" id="cd11484">
    <property type="entry name" value="SLC-NCS1sbd_CobB-like"/>
    <property type="match status" value="1"/>
</dbReference>
<dbReference type="FunFam" id="1.10.4160.10:FF:000003">
    <property type="entry name" value="Cytosine permease"/>
    <property type="match status" value="1"/>
</dbReference>
<dbReference type="Gene3D" id="1.10.4160.10">
    <property type="entry name" value="Hydantoin permease"/>
    <property type="match status" value="1"/>
</dbReference>
<dbReference type="InterPro" id="IPR030191">
    <property type="entry name" value="CodB"/>
</dbReference>
<dbReference type="InterPro" id="IPR001248">
    <property type="entry name" value="Pur-cyt_permease"/>
</dbReference>
<dbReference type="NCBIfam" id="NF008241">
    <property type="entry name" value="PRK11017.1"/>
    <property type="match status" value="1"/>
</dbReference>
<dbReference type="PANTHER" id="PTHR30569:SF0">
    <property type="entry name" value="CYTOSINE PERMEASE"/>
    <property type="match status" value="1"/>
</dbReference>
<dbReference type="PANTHER" id="PTHR30569">
    <property type="entry name" value="CYTOSINE TRANSPORTER CODB"/>
    <property type="match status" value="1"/>
</dbReference>
<dbReference type="Pfam" id="PF02133">
    <property type="entry name" value="Transp_cyt_pur"/>
    <property type="match status" value="1"/>
</dbReference>
<sequence length="419" mass="43650">MSQDNNFSQGPVPQSARKGVLALTFVMLGLTFFSASMWTGGTLGTGLSYHDFFLAVLIGNLLLGIYTSFLGYIGAKTGLTTHLLARFSFGVKGSWLPSLLLGGTQVGWFGVGVAMFAIPVGKATGLDINLLIAVSGLLMTVTVFFGISALTVLSVIAVPAIACLGGYSVWLAVNGMGGLDALKAVVPAQPLDFNVALALVVGSFISAGTLTADFVRFGRNAKLAVLVAMVAFFLGNSLMFIFGAAGAAALGMADISDVMIAQGLLLPAIVVLGLNIWTTNDNALYASGLGFANITGMSSKTLSVINGIIGTVCALWLYNNFVGWLTFLSAAIPPVGGVIIADYLMNRRRYEHFATTRMMSVNWVAILAVALGIAAGHWLPGIVPVNAVLGGALSYLILNPILNRKTTAAMTHVEANSVE</sequence>
<accession>P0AA83</accession>
<accession>P25525</accession>
<reference key="1">
    <citation type="journal article" date="2002" name="Proc. Natl. Acad. Sci. U.S.A.">
        <title>Extensive mosaic structure revealed by the complete genome sequence of uropathogenic Escherichia coli.</title>
        <authorList>
            <person name="Welch R.A."/>
            <person name="Burland V."/>
            <person name="Plunkett G. III"/>
            <person name="Redford P."/>
            <person name="Roesch P."/>
            <person name="Rasko D."/>
            <person name="Buckles E.L."/>
            <person name="Liou S.-R."/>
            <person name="Boutin A."/>
            <person name="Hackett J."/>
            <person name="Stroud D."/>
            <person name="Mayhew G.F."/>
            <person name="Rose D.J."/>
            <person name="Zhou S."/>
            <person name="Schwartz D.C."/>
            <person name="Perna N.T."/>
            <person name="Mobley H.L.T."/>
            <person name="Donnenberg M.S."/>
            <person name="Blattner F.R."/>
        </authorList>
    </citation>
    <scope>NUCLEOTIDE SEQUENCE [LARGE SCALE GENOMIC DNA]</scope>
    <source>
        <strain>CFT073 / ATCC 700928 / UPEC</strain>
    </source>
</reference>
<evidence type="ECO:0000250" key="1"/>
<evidence type="ECO:0000305" key="2"/>
<comment type="function">
    <text evidence="1">Required for cytosine transport into the cell.</text>
</comment>
<comment type="subcellular location">
    <subcellularLocation>
        <location evidence="1">Cell inner membrane</location>
        <topology evidence="1">Multi-pass membrane protein</topology>
    </subcellularLocation>
</comment>
<comment type="similarity">
    <text evidence="2">Belongs to the purine-cytosine permease (2.A.39) family.</text>
</comment>
<protein>
    <recommendedName>
        <fullName>Cytosine permease</fullName>
    </recommendedName>
</protein>
<keyword id="KW-0997">Cell inner membrane</keyword>
<keyword id="KW-1003">Cell membrane</keyword>
<keyword id="KW-0205">Cytosine metabolism</keyword>
<keyword id="KW-0472">Membrane</keyword>
<keyword id="KW-1185">Reference proteome</keyword>
<keyword id="KW-0812">Transmembrane</keyword>
<keyword id="KW-1133">Transmembrane helix</keyword>
<keyword id="KW-0813">Transport</keyword>
<proteinExistence type="inferred from homology"/>
<feature type="chain" id="PRO_0000197934" description="Cytosine permease">
    <location>
        <begin position="1"/>
        <end position="419"/>
    </location>
</feature>
<feature type="topological domain" description="Cytoplasmic" evidence="2">
    <location>
        <begin position="1"/>
        <end position="19"/>
    </location>
</feature>
<feature type="transmembrane region" description="Helical; Name=1" evidence="2">
    <location>
        <begin position="20"/>
        <end position="39"/>
    </location>
</feature>
<feature type="topological domain" description="Periplasmic" evidence="2">
    <location>
        <begin position="40"/>
        <end position="51"/>
    </location>
</feature>
<feature type="transmembrane region" description="Helical; Name=2" evidence="2">
    <location>
        <begin position="52"/>
        <end position="71"/>
    </location>
</feature>
<feature type="topological domain" description="Cytoplasmic" evidence="2">
    <location>
        <begin position="72"/>
        <end position="100"/>
    </location>
</feature>
<feature type="transmembrane region" description="Helical; Name=3" evidence="2">
    <location>
        <begin position="101"/>
        <end position="120"/>
    </location>
</feature>
<feature type="topological domain" description="Periplasmic" evidence="2">
    <location>
        <begin position="121"/>
        <end position="127"/>
    </location>
</feature>
<feature type="transmembrane region" description="Helical; Name=4" evidence="2">
    <location>
        <begin position="128"/>
        <end position="147"/>
    </location>
</feature>
<feature type="topological domain" description="Cytoplasmic" evidence="2">
    <location>
        <begin position="148"/>
        <end position="152"/>
    </location>
</feature>
<feature type="transmembrane region" description="Helical; Name=5" evidence="2">
    <location>
        <begin position="153"/>
        <end position="172"/>
    </location>
</feature>
<feature type="topological domain" description="Periplasmic" evidence="2">
    <location>
        <begin position="173"/>
        <end position="192"/>
    </location>
</feature>
<feature type="transmembrane region" description="Helical; Name=6" evidence="2">
    <location>
        <begin position="193"/>
        <end position="212"/>
    </location>
</feature>
<feature type="topological domain" description="Cytoplasmic" evidence="2">
    <location>
        <begin position="213"/>
        <end position="221"/>
    </location>
</feature>
<feature type="transmembrane region" description="Helical; Name=7" evidence="2">
    <location>
        <begin position="222"/>
        <end position="242"/>
    </location>
</feature>
<feature type="topological domain" description="Periplasmic" evidence="2">
    <location>
        <begin position="243"/>
        <end position="257"/>
    </location>
</feature>
<feature type="transmembrane region" description="Helical; Name=8" evidence="2">
    <location>
        <begin position="258"/>
        <end position="277"/>
    </location>
</feature>
<feature type="topological domain" description="Cytoplasmic" evidence="2">
    <location>
        <begin position="278"/>
        <end position="300"/>
    </location>
</feature>
<feature type="transmembrane region" description="Helical; Name=9" evidence="2">
    <location>
        <begin position="301"/>
        <end position="320"/>
    </location>
</feature>
<feature type="topological domain" description="Periplasmic" evidence="2">
    <location>
        <position position="321"/>
    </location>
</feature>
<feature type="transmembrane region" description="Helical; Name=10" evidence="2">
    <location>
        <begin position="322"/>
        <end position="341"/>
    </location>
</feature>
<feature type="topological domain" description="Cytoplasmic" evidence="2">
    <location>
        <begin position="342"/>
        <end position="358"/>
    </location>
</feature>
<feature type="transmembrane region" description="Helical; Name=11" evidence="2">
    <location>
        <begin position="359"/>
        <end position="378"/>
    </location>
</feature>
<feature type="topological domain" description="Periplasmic" evidence="2">
    <location>
        <begin position="379"/>
        <end position="380"/>
    </location>
</feature>
<feature type="transmembrane region" description="Helical; Name=12" evidence="2">
    <location>
        <begin position="381"/>
        <end position="400"/>
    </location>
</feature>
<feature type="topological domain" description="Cytoplasmic" evidence="2">
    <location>
        <begin position="401"/>
        <end position="419"/>
    </location>
</feature>